<sequence length="434" mass="48241">MQVSVETTQGLGRRVTITVAADSIEKAVKSELVKAAKNVRIDGFRKGHVPMNIVEQRYGASVRQDVLGDLMQRNFVDAIIKEKINPAGAPNYVPGEYKQGEDFTYSVEFEVYPEVELKDLESIEVEKPVVEVNDADVDTMLETLRKQQATWKETDAAATAEDRATLDFTGSIDGEEFEGGKATDFVLAMGQGRMIPGFEEGVIGHKAGEEFTIDVNFPEDYHAENLKGKSAKFAIVLKKVEVRELPELTEEFIKRFGVADGSLAGLRAEVRKNMERELKGAVRNRVKTQAIDGLVSANNIDVPTALVDGEIDVLRRQAAQRFGGNEKQAAELPRELFEEQAKRRVVVGLLLGEVISQHELKADEDRVKALIEEMASAYEDPQEVIEFYSKNKELMNNMRNVALEEQAVETLLAKAKVTEKPTTFSELMNQTTAA</sequence>
<proteinExistence type="inferred from homology"/>
<gene>
    <name evidence="1" type="primary">tig</name>
    <name type="ordered locus">YPA_2653</name>
</gene>
<accession>Q1C4K7</accession>
<feature type="chain" id="PRO_0000256645" description="Trigger factor">
    <location>
        <begin position="1"/>
        <end position="434"/>
    </location>
</feature>
<feature type="domain" description="PPIase FKBP-type" evidence="1">
    <location>
        <begin position="161"/>
        <end position="246"/>
    </location>
</feature>
<organism>
    <name type="scientific">Yersinia pestis bv. Antiqua (strain Antiqua)</name>
    <dbReference type="NCBI Taxonomy" id="360102"/>
    <lineage>
        <taxon>Bacteria</taxon>
        <taxon>Pseudomonadati</taxon>
        <taxon>Pseudomonadota</taxon>
        <taxon>Gammaproteobacteria</taxon>
        <taxon>Enterobacterales</taxon>
        <taxon>Yersiniaceae</taxon>
        <taxon>Yersinia</taxon>
    </lineage>
</organism>
<dbReference type="EC" id="5.2.1.8" evidence="1"/>
<dbReference type="EMBL" id="CP000308">
    <property type="protein sequence ID" value="ABG14615.1"/>
    <property type="molecule type" value="Genomic_DNA"/>
</dbReference>
<dbReference type="RefSeq" id="WP_002208643.1">
    <property type="nucleotide sequence ID" value="NZ_CP009906.1"/>
</dbReference>
<dbReference type="SMR" id="Q1C4K7"/>
<dbReference type="GeneID" id="57975553"/>
<dbReference type="KEGG" id="ypa:YPA_2653"/>
<dbReference type="Proteomes" id="UP000001971">
    <property type="component" value="Chromosome"/>
</dbReference>
<dbReference type="GO" id="GO:0005737">
    <property type="term" value="C:cytoplasm"/>
    <property type="evidence" value="ECO:0007669"/>
    <property type="project" value="UniProtKB-SubCell"/>
</dbReference>
<dbReference type="GO" id="GO:0003755">
    <property type="term" value="F:peptidyl-prolyl cis-trans isomerase activity"/>
    <property type="evidence" value="ECO:0007669"/>
    <property type="project" value="UniProtKB-UniRule"/>
</dbReference>
<dbReference type="GO" id="GO:0044183">
    <property type="term" value="F:protein folding chaperone"/>
    <property type="evidence" value="ECO:0007669"/>
    <property type="project" value="TreeGrafter"/>
</dbReference>
<dbReference type="GO" id="GO:0043022">
    <property type="term" value="F:ribosome binding"/>
    <property type="evidence" value="ECO:0007669"/>
    <property type="project" value="TreeGrafter"/>
</dbReference>
<dbReference type="GO" id="GO:0051083">
    <property type="term" value="P:'de novo' cotranslational protein folding"/>
    <property type="evidence" value="ECO:0007669"/>
    <property type="project" value="TreeGrafter"/>
</dbReference>
<dbReference type="GO" id="GO:0051301">
    <property type="term" value="P:cell division"/>
    <property type="evidence" value="ECO:0007669"/>
    <property type="project" value="UniProtKB-KW"/>
</dbReference>
<dbReference type="GO" id="GO:0061077">
    <property type="term" value="P:chaperone-mediated protein folding"/>
    <property type="evidence" value="ECO:0007669"/>
    <property type="project" value="TreeGrafter"/>
</dbReference>
<dbReference type="GO" id="GO:0015031">
    <property type="term" value="P:protein transport"/>
    <property type="evidence" value="ECO:0007669"/>
    <property type="project" value="UniProtKB-UniRule"/>
</dbReference>
<dbReference type="GO" id="GO:0043335">
    <property type="term" value="P:protein unfolding"/>
    <property type="evidence" value="ECO:0007669"/>
    <property type="project" value="TreeGrafter"/>
</dbReference>
<dbReference type="FunFam" id="1.10.3120.10:FF:000001">
    <property type="entry name" value="Trigger factor"/>
    <property type="match status" value="1"/>
</dbReference>
<dbReference type="FunFam" id="3.10.50.40:FF:000001">
    <property type="entry name" value="Trigger factor"/>
    <property type="match status" value="1"/>
</dbReference>
<dbReference type="FunFam" id="3.30.70.1050:FF:000001">
    <property type="entry name" value="Trigger factor"/>
    <property type="match status" value="1"/>
</dbReference>
<dbReference type="Gene3D" id="3.10.50.40">
    <property type="match status" value="1"/>
</dbReference>
<dbReference type="Gene3D" id="3.30.70.1050">
    <property type="entry name" value="Trigger factor ribosome-binding domain"/>
    <property type="match status" value="1"/>
</dbReference>
<dbReference type="Gene3D" id="1.10.3120.10">
    <property type="entry name" value="Trigger factor, C-terminal domain"/>
    <property type="match status" value="1"/>
</dbReference>
<dbReference type="HAMAP" id="MF_00303">
    <property type="entry name" value="Trigger_factor_Tig"/>
    <property type="match status" value="1"/>
</dbReference>
<dbReference type="InterPro" id="IPR046357">
    <property type="entry name" value="PPIase_dom_sf"/>
</dbReference>
<dbReference type="InterPro" id="IPR001179">
    <property type="entry name" value="PPIase_FKBP_dom"/>
</dbReference>
<dbReference type="InterPro" id="IPR005215">
    <property type="entry name" value="Trig_fac"/>
</dbReference>
<dbReference type="InterPro" id="IPR008880">
    <property type="entry name" value="Trigger_fac_C"/>
</dbReference>
<dbReference type="InterPro" id="IPR037041">
    <property type="entry name" value="Trigger_fac_C_sf"/>
</dbReference>
<dbReference type="InterPro" id="IPR008881">
    <property type="entry name" value="Trigger_fac_ribosome-bd_bac"/>
</dbReference>
<dbReference type="InterPro" id="IPR036611">
    <property type="entry name" value="Trigger_fac_ribosome-bd_sf"/>
</dbReference>
<dbReference type="InterPro" id="IPR027304">
    <property type="entry name" value="Trigger_fact/SurA_dom_sf"/>
</dbReference>
<dbReference type="NCBIfam" id="TIGR00115">
    <property type="entry name" value="tig"/>
    <property type="match status" value="1"/>
</dbReference>
<dbReference type="PANTHER" id="PTHR30560">
    <property type="entry name" value="TRIGGER FACTOR CHAPERONE AND PEPTIDYL-PROLYL CIS/TRANS ISOMERASE"/>
    <property type="match status" value="1"/>
</dbReference>
<dbReference type="PANTHER" id="PTHR30560:SF3">
    <property type="entry name" value="TRIGGER FACTOR-LIKE PROTEIN TIG, CHLOROPLASTIC"/>
    <property type="match status" value="1"/>
</dbReference>
<dbReference type="Pfam" id="PF00254">
    <property type="entry name" value="FKBP_C"/>
    <property type="match status" value="1"/>
</dbReference>
<dbReference type="Pfam" id="PF05698">
    <property type="entry name" value="Trigger_C"/>
    <property type="match status" value="1"/>
</dbReference>
<dbReference type="Pfam" id="PF05697">
    <property type="entry name" value="Trigger_N"/>
    <property type="match status" value="1"/>
</dbReference>
<dbReference type="PIRSF" id="PIRSF003095">
    <property type="entry name" value="Trigger_factor"/>
    <property type="match status" value="1"/>
</dbReference>
<dbReference type="SUPFAM" id="SSF54534">
    <property type="entry name" value="FKBP-like"/>
    <property type="match status" value="1"/>
</dbReference>
<dbReference type="SUPFAM" id="SSF109998">
    <property type="entry name" value="Triger factor/SurA peptide-binding domain-like"/>
    <property type="match status" value="1"/>
</dbReference>
<dbReference type="SUPFAM" id="SSF102735">
    <property type="entry name" value="Trigger factor ribosome-binding domain"/>
    <property type="match status" value="1"/>
</dbReference>
<dbReference type="PROSITE" id="PS50059">
    <property type="entry name" value="FKBP_PPIASE"/>
    <property type="match status" value="1"/>
</dbReference>
<keyword id="KW-0131">Cell cycle</keyword>
<keyword id="KW-0132">Cell division</keyword>
<keyword id="KW-0143">Chaperone</keyword>
<keyword id="KW-0963">Cytoplasm</keyword>
<keyword id="KW-0413">Isomerase</keyword>
<keyword id="KW-0697">Rotamase</keyword>
<comment type="function">
    <text evidence="1">Involved in protein export. Acts as a chaperone by maintaining the newly synthesized protein in an open conformation. Functions as a peptidyl-prolyl cis-trans isomerase.</text>
</comment>
<comment type="catalytic activity">
    <reaction evidence="1">
        <text>[protein]-peptidylproline (omega=180) = [protein]-peptidylproline (omega=0)</text>
        <dbReference type="Rhea" id="RHEA:16237"/>
        <dbReference type="Rhea" id="RHEA-COMP:10747"/>
        <dbReference type="Rhea" id="RHEA-COMP:10748"/>
        <dbReference type="ChEBI" id="CHEBI:83833"/>
        <dbReference type="ChEBI" id="CHEBI:83834"/>
        <dbReference type="EC" id="5.2.1.8"/>
    </reaction>
</comment>
<comment type="subcellular location">
    <subcellularLocation>
        <location>Cytoplasm</location>
    </subcellularLocation>
    <text evidence="1">About half TF is bound to the ribosome near the polypeptide exit tunnel while the other half is free in the cytoplasm.</text>
</comment>
<comment type="domain">
    <text evidence="1">Consists of 3 domains; the N-terminus binds the ribosome, the middle domain has PPIase activity, while the C-terminus has intrinsic chaperone activity on its own.</text>
</comment>
<comment type="similarity">
    <text evidence="1">Belongs to the FKBP-type PPIase family. Tig subfamily.</text>
</comment>
<evidence type="ECO:0000255" key="1">
    <source>
        <dbReference type="HAMAP-Rule" id="MF_00303"/>
    </source>
</evidence>
<protein>
    <recommendedName>
        <fullName evidence="1">Trigger factor</fullName>
        <shortName evidence="1">TF</shortName>
        <ecNumber evidence="1">5.2.1.8</ecNumber>
    </recommendedName>
    <alternativeName>
        <fullName evidence="1">PPIase</fullName>
    </alternativeName>
</protein>
<reference key="1">
    <citation type="journal article" date="2006" name="J. Bacteriol.">
        <title>Complete genome sequence of Yersinia pestis strains Antiqua and Nepal516: evidence of gene reduction in an emerging pathogen.</title>
        <authorList>
            <person name="Chain P.S.G."/>
            <person name="Hu P."/>
            <person name="Malfatti S.A."/>
            <person name="Radnedge L."/>
            <person name="Larimer F."/>
            <person name="Vergez L.M."/>
            <person name="Worsham P."/>
            <person name="Chu M.C."/>
            <person name="Andersen G.L."/>
        </authorList>
    </citation>
    <scope>NUCLEOTIDE SEQUENCE [LARGE SCALE GENOMIC DNA]</scope>
    <source>
        <strain>Antiqua</strain>
    </source>
</reference>
<name>TIG_YERPA</name>